<feature type="chain" id="PRO_0000350669" description="Heptaprenylglyceryl phosphate synthase">
    <location>
        <begin position="1"/>
        <end position="227"/>
    </location>
</feature>
<feature type="binding site" evidence="1">
    <location>
        <position position="13"/>
    </location>
    <ligand>
        <name>sn-glycerol 1-phosphate</name>
        <dbReference type="ChEBI" id="CHEBI:57685"/>
    </ligand>
</feature>
<feature type="binding site" evidence="1">
    <location>
        <position position="15"/>
    </location>
    <ligand>
        <name>Mg(2+)</name>
        <dbReference type="ChEBI" id="CHEBI:18420"/>
    </ligand>
</feature>
<feature type="binding site" evidence="1">
    <location>
        <position position="41"/>
    </location>
    <ligand>
        <name>Mg(2+)</name>
        <dbReference type="ChEBI" id="CHEBI:18420"/>
    </ligand>
</feature>
<feature type="binding site" evidence="1">
    <location>
        <begin position="159"/>
        <end position="164"/>
    </location>
    <ligand>
        <name>sn-glycerol 1-phosphate</name>
        <dbReference type="ChEBI" id="CHEBI:57685"/>
    </ligand>
</feature>
<feature type="binding site" evidence="1">
    <location>
        <position position="189"/>
    </location>
    <ligand>
        <name>sn-glycerol 1-phosphate</name>
        <dbReference type="ChEBI" id="CHEBI:57685"/>
    </ligand>
</feature>
<feature type="binding site" evidence="1">
    <location>
        <begin position="209"/>
        <end position="210"/>
    </location>
    <ligand>
        <name>sn-glycerol 1-phosphate</name>
        <dbReference type="ChEBI" id="CHEBI:57685"/>
    </ligand>
</feature>
<dbReference type="EC" id="2.5.1.n9" evidence="1"/>
<dbReference type="EMBL" id="CP001022">
    <property type="protein sequence ID" value="ACB59945.1"/>
    <property type="molecule type" value="Genomic_DNA"/>
</dbReference>
<dbReference type="RefSeq" id="WP_012369369.1">
    <property type="nucleotide sequence ID" value="NC_010556.1"/>
</dbReference>
<dbReference type="SMR" id="B1YJ15"/>
<dbReference type="STRING" id="262543.Exig_0463"/>
<dbReference type="KEGG" id="esi:Exig_0463"/>
<dbReference type="eggNOG" id="COG1646">
    <property type="taxonomic scope" value="Bacteria"/>
</dbReference>
<dbReference type="HOGENOM" id="CLU_095211_0_0_9"/>
<dbReference type="OrthoDB" id="2381757at2"/>
<dbReference type="UniPathway" id="UPA00940"/>
<dbReference type="Proteomes" id="UP000001681">
    <property type="component" value="Chromosome"/>
</dbReference>
<dbReference type="GO" id="GO:0120536">
    <property type="term" value="F:heptaprenylglyceryl phosphate synthase activity"/>
    <property type="evidence" value="ECO:0007669"/>
    <property type="project" value="RHEA"/>
</dbReference>
<dbReference type="GO" id="GO:0000287">
    <property type="term" value="F:magnesium ion binding"/>
    <property type="evidence" value="ECO:0007669"/>
    <property type="project" value="UniProtKB-UniRule"/>
</dbReference>
<dbReference type="GO" id="GO:0046474">
    <property type="term" value="P:glycerophospholipid biosynthetic process"/>
    <property type="evidence" value="ECO:0007669"/>
    <property type="project" value="UniProtKB-UniRule"/>
</dbReference>
<dbReference type="CDD" id="cd02812">
    <property type="entry name" value="PcrB_like"/>
    <property type="match status" value="1"/>
</dbReference>
<dbReference type="Gene3D" id="3.20.20.390">
    <property type="entry name" value="FMN-linked oxidoreductases"/>
    <property type="match status" value="1"/>
</dbReference>
<dbReference type="HAMAP" id="MF_00112">
    <property type="entry name" value="GGGP_HepGP_synthase"/>
    <property type="match status" value="1"/>
</dbReference>
<dbReference type="InterPro" id="IPR039074">
    <property type="entry name" value="GGGP/HepGP_synthase_I"/>
</dbReference>
<dbReference type="InterPro" id="IPR038597">
    <property type="entry name" value="GGGP/HepGP_synthase_sf"/>
</dbReference>
<dbReference type="InterPro" id="IPR008205">
    <property type="entry name" value="GGGP_HepGP_synthase"/>
</dbReference>
<dbReference type="NCBIfam" id="TIGR01768">
    <property type="entry name" value="GGGP-family"/>
    <property type="match status" value="1"/>
</dbReference>
<dbReference type="NCBIfam" id="NF003197">
    <property type="entry name" value="PRK04169.1-1"/>
    <property type="match status" value="1"/>
</dbReference>
<dbReference type="NCBIfam" id="NF003199">
    <property type="entry name" value="PRK04169.1-3"/>
    <property type="match status" value="1"/>
</dbReference>
<dbReference type="PANTHER" id="PTHR40029">
    <property type="match status" value="1"/>
</dbReference>
<dbReference type="PANTHER" id="PTHR40029:SF2">
    <property type="entry name" value="HEPTAPRENYLGLYCERYL PHOSPHATE SYNTHASE"/>
    <property type="match status" value="1"/>
</dbReference>
<dbReference type="Pfam" id="PF01884">
    <property type="entry name" value="PcrB"/>
    <property type="match status" value="1"/>
</dbReference>
<dbReference type="SUPFAM" id="SSF51395">
    <property type="entry name" value="FMN-linked oxidoreductases"/>
    <property type="match status" value="1"/>
</dbReference>
<comment type="function">
    <text evidence="1">Prenyltransferase that catalyzes in vivo the transfer of the heptaprenyl moiety of heptaprenyl pyrophosphate (HepPP; 35 carbon atoms) to the C3 hydroxyl of sn-glycerol-1-phosphate (G1P), producing heptaprenylglyceryl phosphate (HepGP). This reaction is an ether-bond-formation step in the biosynthesis of archaea-type G1P-based membrane lipids found in Bacillales.</text>
</comment>
<comment type="catalytic activity">
    <reaction evidence="1">
        <text>sn-glycerol 1-phosphate + all-trans-heptaprenyl diphosphate = 3-heptaprenyl-sn-glycero-1-phosphate + diphosphate</text>
        <dbReference type="Rhea" id="RHEA:33495"/>
        <dbReference type="ChEBI" id="CHEBI:33019"/>
        <dbReference type="ChEBI" id="CHEBI:57685"/>
        <dbReference type="ChEBI" id="CHEBI:58206"/>
        <dbReference type="ChEBI" id="CHEBI:64781"/>
        <dbReference type="EC" id="2.5.1.n9"/>
    </reaction>
</comment>
<comment type="cofactor">
    <cofactor evidence="1">
        <name>Mg(2+)</name>
        <dbReference type="ChEBI" id="CHEBI:18420"/>
    </cofactor>
</comment>
<comment type="pathway">
    <text evidence="1">Membrane lipid metabolism; glycerophospholipid metabolism.</text>
</comment>
<comment type="subunit">
    <text evidence="1">Homodimer.</text>
</comment>
<comment type="similarity">
    <text evidence="1">Belongs to the GGGP/HepGP synthase family. Group I subfamily.</text>
</comment>
<keyword id="KW-0444">Lipid biosynthesis</keyword>
<keyword id="KW-0443">Lipid metabolism</keyword>
<keyword id="KW-0460">Magnesium</keyword>
<keyword id="KW-0479">Metal-binding</keyword>
<keyword id="KW-0594">Phospholipid biosynthesis</keyword>
<keyword id="KW-1208">Phospholipid metabolism</keyword>
<keyword id="KW-1185">Reference proteome</keyword>
<keyword id="KW-0808">Transferase</keyword>
<reference key="1">
    <citation type="submission" date="2008-04" db="EMBL/GenBank/DDBJ databases">
        <title>Complete sequence of chromosome of Exiguobacterium sibiricum 255-15.</title>
        <authorList>
            <consortium name="US DOE Joint Genome Institute"/>
            <person name="Copeland A."/>
            <person name="Lucas S."/>
            <person name="Lapidus A."/>
            <person name="Glavina del Rio T."/>
            <person name="Dalin E."/>
            <person name="Tice H."/>
            <person name="Bruce D."/>
            <person name="Goodwin L."/>
            <person name="Pitluck S."/>
            <person name="Kiss H."/>
            <person name="Chertkov O."/>
            <person name="Monk C."/>
            <person name="Brettin T."/>
            <person name="Detter J.C."/>
            <person name="Han C."/>
            <person name="Kuske C.R."/>
            <person name="Schmutz J."/>
            <person name="Larimer F."/>
            <person name="Land M."/>
            <person name="Hauser L."/>
            <person name="Kyrpides N."/>
            <person name="Mikhailova N."/>
            <person name="Vishnivetskaya T."/>
            <person name="Rodrigues D.F."/>
            <person name="Gilichinsky D."/>
            <person name="Tiedje J."/>
            <person name="Richardson P."/>
        </authorList>
    </citation>
    <scope>NUCLEOTIDE SEQUENCE [LARGE SCALE GENOMIC DNA]</scope>
    <source>
        <strain>DSM 17290 / CCUG 55495 / CIP 109462 / JCM 13490 / 255-15</strain>
    </source>
</reference>
<evidence type="ECO:0000255" key="1">
    <source>
        <dbReference type="HAMAP-Rule" id="MF_00112"/>
    </source>
</evidence>
<accession>B1YJ15</accession>
<gene>
    <name evidence="1" type="primary">pcrB</name>
    <name type="ordered locus">Exig_0463</name>
</gene>
<sequence length="227" mass="24751">MLLPYNEWRHVFKLDPAKEIEEAALQAIATSGTDAIIVGGTDDITLDATLDLLMRLRRYPVAVALEVSELEAATMGFDAYLTPSVLNSGTLEHVIDKQVEALEEVGHMLAHQDLVGEGYIVLNADAKVARVTQAKLLNDDQVVAYAQLADSVFRMPIIYLEYSGMYGDPSLVASVKRVLKQGRLFYGGGIDSIERAQEMLTHADTIVVGNIIYDNLEAALATVAATR</sequence>
<organism>
    <name type="scientific">Exiguobacterium sibiricum (strain DSM 17290 / CCUG 55495 / CIP 109462 / JCM 13490 / 255-15)</name>
    <dbReference type="NCBI Taxonomy" id="262543"/>
    <lineage>
        <taxon>Bacteria</taxon>
        <taxon>Bacillati</taxon>
        <taxon>Bacillota</taxon>
        <taxon>Bacilli</taxon>
        <taxon>Bacillales</taxon>
        <taxon>Bacillales Family XII. Incertae Sedis</taxon>
        <taxon>Exiguobacterium</taxon>
    </lineage>
</organism>
<name>PCRB_EXIS2</name>
<protein>
    <recommendedName>
        <fullName evidence="1">Heptaprenylglyceryl phosphate synthase</fullName>
        <shortName evidence="1">HepGP synthase</shortName>
        <ecNumber evidence="1">2.5.1.n9</ecNumber>
    </recommendedName>
    <alternativeName>
        <fullName evidence="1">Glycerol-1-phosphate heptaprenyltransferase</fullName>
    </alternativeName>
</protein>
<proteinExistence type="inferred from homology"/>